<sequence length="128" mass="13816">MRYAIMVTGPAYGTQQASSALQFAHALLNEGHELASVFFYREGVYNANLLTSPASDEYDLVRAWQKLNTQHGVALNICVAAALRRGIIDETEAGRLELPSANLQPGFTLSGLGALAEASLTCDRVVQF</sequence>
<keyword id="KW-0963">Cytoplasm</keyword>
<keyword id="KW-0808">Transferase</keyword>
<keyword id="KW-0819">tRNA processing</keyword>
<accession>B5R2A2</accession>
<protein>
    <recommendedName>
        <fullName evidence="1">Sulfurtransferase TusD</fullName>
        <ecNumber evidence="1">2.8.1.-</ecNumber>
    </recommendedName>
    <alternativeName>
        <fullName evidence="1">tRNA 2-thiouridine synthesizing protein D</fullName>
    </alternativeName>
</protein>
<evidence type="ECO:0000255" key="1">
    <source>
        <dbReference type="HAMAP-Rule" id="MF_00390"/>
    </source>
</evidence>
<organism>
    <name type="scientific">Salmonella enteritidis PT4 (strain P125109)</name>
    <dbReference type="NCBI Taxonomy" id="550537"/>
    <lineage>
        <taxon>Bacteria</taxon>
        <taxon>Pseudomonadati</taxon>
        <taxon>Pseudomonadota</taxon>
        <taxon>Gammaproteobacteria</taxon>
        <taxon>Enterobacterales</taxon>
        <taxon>Enterobacteriaceae</taxon>
        <taxon>Salmonella</taxon>
    </lineage>
</organism>
<dbReference type="EC" id="2.8.1.-" evidence="1"/>
<dbReference type="EMBL" id="AM933172">
    <property type="protein sequence ID" value="CAR34854.1"/>
    <property type="molecule type" value="Genomic_DNA"/>
</dbReference>
<dbReference type="RefSeq" id="WP_001268011.1">
    <property type="nucleotide sequence ID" value="NC_011294.1"/>
</dbReference>
<dbReference type="SMR" id="B5R2A2"/>
<dbReference type="KEGG" id="set:SEN3279"/>
<dbReference type="HOGENOM" id="CLU_132095_0_0_6"/>
<dbReference type="Proteomes" id="UP000000613">
    <property type="component" value="Chromosome"/>
</dbReference>
<dbReference type="GO" id="GO:1990228">
    <property type="term" value="C:sulfurtransferase complex"/>
    <property type="evidence" value="ECO:0007669"/>
    <property type="project" value="TreeGrafter"/>
</dbReference>
<dbReference type="GO" id="GO:0097163">
    <property type="term" value="F:sulfur carrier activity"/>
    <property type="evidence" value="ECO:0007669"/>
    <property type="project" value="TreeGrafter"/>
</dbReference>
<dbReference type="GO" id="GO:0016783">
    <property type="term" value="F:sulfurtransferase activity"/>
    <property type="evidence" value="ECO:0007669"/>
    <property type="project" value="UniProtKB-UniRule"/>
</dbReference>
<dbReference type="GO" id="GO:0002143">
    <property type="term" value="P:tRNA wobble position uridine thiolation"/>
    <property type="evidence" value="ECO:0007669"/>
    <property type="project" value="TreeGrafter"/>
</dbReference>
<dbReference type="FunFam" id="3.40.1260.10:FF:000001">
    <property type="entry name" value="Sulfurtransferase TusD"/>
    <property type="match status" value="1"/>
</dbReference>
<dbReference type="Gene3D" id="3.40.1260.10">
    <property type="entry name" value="DsrEFH-like"/>
    <property type="match status" value="1"/>
</dbReference>
<dbReference type="HAMAP" id="MF_00390">
    <property type="entry name" value="Thiourid_synth_D"/>
    <property type="match status" value="1"/>
</dbReference>
<dbReference type="InterPro" id="IPR027396">
    <property type="entry name" value="DsrEFH-like"/>
</dbReference>
<dbReference type="InterPro" id="IPR003787">
    <property type="entry name" value="Sulphur_relay_DsrE/F-like"/>
</dbReference>
<dbReference type="InterPro" id="IPR017463">
    <property type="entry name" value="Sulphur_relay_TusD/DsrE"/>
</dbReference>
<dbReference type="NCBIfam" id="NF001237">
    <property type="entry name" value="PRK00207.1"/>
    <property type="match status" value="1"/>
</dbReference>
<dbReference type="NCBIfam" id="TIGR03012">
    <property type="entry name" value="sulf_tusD_dsrE"/>
    <property type="match status" value="1"/>
</dbReference>
<dbReference type="PANTHER" id="PTHR34874">
    <property type="entry name" value="PROTEIN YCHN"/>
    <property type="match status" value="1"/>
</dbReference>
<dbReference type="PANTHER" id="PTHR34874:SF3">
    <property type="entry name" value="SULFURTRANSFERASE TUSD"/>
    <property type="match status" value="1"/>
</dbReference>
<dbReference type="Pfam" id="PF02635">
    <property type="entry name" value="DsrE"/>
    <property type="match status" value="1"/>
</dbReference>
<dbReference type="SUPFAM" id="SSF75169">
    <property type="entry name" value="DsrEFH-like"/>
    <property type="match status" value="1"/>
</dbReference>
<reference key="1">
    <citation type="journal article" date="2008" name="Genome Res.">
        <title>Comparative genome analysis of Salmonella enteritidis PT4 and Salmonella gallinarum 287/91 provides insights into evolutionary and host adaptation pathways.</title>
        <authorList>
            <person name="Thomson N.R."/>
            <person name="Clayton D.J."/>
            <person name="Windhorst D."/>
            <person name="Vernikos G."/>
            <person name="Davidson S."/>
            <person name="Churcher C."/>
            <person name="Quail M.A."/>
            <person name="Stevens M."/>
            <person name="Jones M.A."/>
            <person name="Watson M."/>
            <person name="Barron A."/>
            <person name="Layton A."/>
            <person name="Pickard D."/>
            <person name="Kingsley R.A."/>
            <person name="Bignell A."/>
            <person name="Clark L."/>
            <person name="Harris B."/>
            <person name="Ormond D."/>
            <person name="Abdellah Z."/>
            <person name="Brooks K."/>
            <person name="Cherevach I."/>
            <person name="Chillingworth T."/>
            <person name="Woodward J."/>
            <person name="Norberczak H."/>
            <person name="Lord A."/>
            <person name="Arrowsmith C."/>
            <person name="Jagels K."/>
            <person name="Moule S."/>
            <person name="Mungall K."/>
            <person name="Saunders M."/>
            <person name="Whitehead S."/>
            <person name="Chabalgoity J.A."/>
            <person name="Maskell D."/>
            <person name="Humphreys T."/>
            <person name="Roberts M."/>
            <person name="Barrow P.A."/>
            <person name="Dougan G."/>
            <person name="Parkhill J."/>
        </authorList>
    </citation>
    <scope>NUCLEOTIDE SEQUENCE [LARGE SCALE GENOMIC DNA]</scope>
    <source>
        <strain>P125109</strain>
    </source>
</reference>
<proteinExistence type="inferred from homology"/>
<feature type="chain" id="PRO_1000122869" description="Sulfurtransferase TusD">
    <location>
        <begin position="1"/>
        <end position="128"/>
    </location>
</feature>
<feature type="active site" description="Cysteine persulfide intermediate" evidence="1">
    <location>
        <position position="78"/>
    </location>
</feature>
<comment type="function">
    <text evidence="1">Part of a sulfur-relay system required for 2-thiolation of 5-methylaminomethyl-2-thiouridine (mnm(5)s(2)U) at tRNA wobble positions. Accepts sulfur from TusA and transfers it in turn to TusE.</text>
</comment>
<comment type="subunit">
    <text evidence="1">Heterohexamer, formed by a dimer of trimers. The hexameric TusBCD complex contains 2 copies each of TusB, TusC and TusD. The TusBCD complex interacts with TusE.</text>
</comment>
<comment type="subcellular location">
    <subcellularLocation>
        <location evidence="1">Cytoplasm</location>
    </subcellularLocation>
</comment>
<comment type="similarity">
    <text evidence="1">Belongs to the DsrE/TusD family.</text>
</comment>
<name>TUSD_SALEP</name>
<gene>
    <name evidence="1" type="primary">tusD</name>
    <name type="ordered locus">SEN3279</name>
</gene>